<evidence type="ECO:0000250" key="1"/>
<evidence type="ECO:0000255" key="2">
    <source>
        <dbReference type="PROSITE-ProRule" id="PRU00274"/>
    </source>
</evidence>
<evidence type="ECO:0000269" key="3">
    <source>
    </source>
</evidence>
<evidence type="ECO:0000269" key="4">
    <source>
    </source>
</evidence>
<evidence type="ECO:0000305" key="5"/>
<evidence type="ECO:0000305" key="6">
    <source>
    </source>
</evidence>
<evidence type="ECO:0000305" key="7">
    <source>
    </source>
</evidence>
<protein>
    <recommendedName>
        <fullName>Beta-fibrinogenase mucrofibrase-1</fullName>
        <ecNumber>3.4.21.-</ecNumber>
    </recommendedName>
    <alternativeName>
        <fullName>Snake venom serine protease</fullName>
        <shortName>SVSP</shortName>
    </alternativeName>
    <alternativeName>
        <fullName>Tm-VIG</fullName>
    </alternativeName>
</protein>
<comment type="function">
    <text evidence="3 4">Snake venom serine protease with strong beta-fibrinogenolytic activities, angiotensin I (AGT)-degrading activities and strong kallikrein-like activities in vitro, releasing bradykinin from kininogen (KNG1). Intravenous injection strongly lowers blood pressure in experimental rats, which may be explained by the action on angiotensin I and kininogen.</text>
</comment>
<comment type="biophysicochemical properties">
    <temperatureDependence>
        <text evidence="3">Heat-stable to about 95 degrees Celsius.</text>
    </temperatureDependence>
</comment>
<comment type="subunit">
    <text evidence="4">Monomer.</text>
</comment>
<comment type="subcellular location">
    <subcellularLocation>
        <location>Secreted</location>
    </subcellularLocation>
</comment>
<comment type="tissue specificity">
    <text>Expressed by the venom gland.</text>
</comment>
<comment type="miscellaneous">
    <text evidence="6 7">Negative results: does not have activity on gamma-chains of fibrinogen (FGG) (PubMed:7811255), and does not coagulate human plasma. Does not induce or inhibit platelet aggregation (PubMed:11237764).</text>
</comment>
<comment type="similarity">
    <text evidence="2">Belongs to the peptidase S1 family. Snake venom subfamily.</text>
</comment>
<comment type="caution">
    <text evidence="5">The correspondence between the sequence (indicated in PubMed:7811255) and the function (from PubMed:11237764) has not been clearly demonstrated.</text>
</comment>
<keyword id="KW-1015">Disulfide bond</keyword>
<keyword id="KW-1206">Fibrinogenolytic toxin</keyword>
<keyword id="KW-1199">Hemostasis impairing toxin</keyword>
<keyword id="KW-0378">Hydrolase</keyword>
<keyword id="KW-0382">Hypotensive agent</keyword>
<keyword id="KW-0645">Protease</keyword>
<keyword id="KW-0964">Secreted</keyword>
<keyword id="KW-0720">Serine protease</keyword>
<keyword id="KW-0732">Signal</keyword>
<keyword id="KW-0800">Toxin</keyword>
<keyword id="KW-0865">Zymogen</keyword>
<dbReference type="EC" id="3.4.21.-"/>
<dbReference type="EMBL" id="X83221">
    <property type="protein sequence ID" value="CAA58221.1"/>
    <property type="molecule type" value="mRNA"/>
</dbReference>
<dbReference type="PIR" id="JC2479">
    <property type="entry name" value="JC2479"/>
</dbReference>
<dbReference type="SMR" id="Q91507"/>
<dbReference type="MEROPS" id="S01.343"/>
<dbReference type="MEROPS" id="S01.344"/>
<dbReference type="GO" id="GO:0005576">
    <property type="term" value="C:extracellular region"/>
    <property type="evidence" value="ECO:0007669"/>
    <property type="project" value="UniProtKB-SubCell"/>
</dbReference>
<dbReference type="GO" id="GO:0030141">
    <property type="term" value="C:secretory granule"/>
    <property type="evidence" value="ECO:0007669"/>
    <property type="project" value="TreeGrafter"/>
</dbReference>
<dbReference type="GO" id="GO:0004252">
    <property type="term" value="F:serine-type endopeptidase activity"/>
    <property type="evidence" value="ECO:0007669"/>
    <property type="project" value="InterPro"/>
</dbReference>
<dbReference type="GO" id="GO:0090729">
    <property type="term" value="F:toxin activity"/>
    <property type="evidence" value="ECO:0007669"/>
    <property type="project" value="UniProtKB-KW"/>
</dbReference>
<dbReference type="GO" id="GO:0006508">
    <property type="term" value="P:proteolysis"/>
    <property type="evidence" value="ECO:0007669"/>
    <property type="project" value="UniProtKB-KW"/>
</dbReference>
<dbReference type="GO" id="GO:0008217">
    <property type="term" value="P:regulation of blood pressure"/>
    <property type="evidence" value="ECO:0007669"/>
    <property type="project" value="UniProtKB-KW"/>
</dbReference>
<dbReference type="CDD" id="cd00190">
    <property type="entry name" value="Tryp_SPc"/>
    <property type="match status" value="1"/>
</dbReference>
<dbReference type="FunFam" id="2.40.10.10:FF:000158">
    <property type="entry name" value="Thrombin-like enzyme saxthrombin"/>
    <property type="match status" value="1"/>
</dbReference>
<dbReference type="FunFam" id="2.40.10.10:FF:000153">
    <property type="entry name" value="Venom plasminogen activator TSV-PA"/>
    <property type="match status" value="1"/>
</dbReference>
<dbReference type="Gene3D" id="2.40.10.10">
    <property type="entry name" value="Trypsin-like serine proteases"/>
    <property type="match status" value="2"/>
</dbReference>
<dbReference type="InterPro" id="IPR009003">
    <property type="entry name" value="Peptidase_S1_PA"/>
</dbReference>
<dbReference type="InterPro" id="IPR043504">
    <property type="entry name" value="Peptidase_S1_PA_chymotrypsin"/>
</dbReference>
<dbReference type="InterPro" id="IPR001314">
    <property type="entry name" value="Peptidase_S1A"/>
</dbReference>
<dbReference type="InterPro" id="IPR001254">
    <property type="entry name" value="Trypsin_dom"/>
</dbReference>
<dbReference type="InterPro" id="IPR018114">
    <property type="entry name" value="TRYPSIN_HIS"/>
</dbReference>
<dbReference type="InterPro" id="IPR033116">
    <property type="entry name" value="TRYPSIN_SER"/>
</dbReference>
<dbReference type="PANTHER" id="PTHR24271:SF47">
    <property type="entry name" value="KALLIKREIN-1"/>
    <property type="match status" value="1"/>
</dbReference>
<dbReference type="PANTHER" id="PTHR24271">
    <property type="entry name" value="KALLIKREIN-RELATED"/>
    <property type="match status" value="1"/>
</dbReference>
<dbReference type="Pfam" id="PF00089">
    <property type="entry name" value="Trypsin"/>
    <property type="match status" value="1"/>
</dbReference>
<dbReference type="PRINTS" id="PR00722">
    <property type="entry name" value="CHYMOTRYPSIN"/>
</dbReference>
<dbReference type="SMART" id="SM00020">
    <property type="entry name" value="Tryp_SPc"/>
    <property type="match status" value="1"/>
</dbReference>
<dbReference type="SUPFAM" id="SSF50494">
    <property type="entry name" value="Trypsin-like serine proteases"/>
    <property type="match status" value="1"/>
</dbReference>
<dbReference type="PROSITE" id="PS50240">
    <property type="entry name" value="TRYPSIN_DOM"/>
    <property type="match status" value="1"/>
</dbReference>
<dbReference type="PROSITE" id="PS00134">
    <property type="entry name" value="TRYPSIN_HIS"/>
    <property type="match status" value="1"/>
</dbReference>
<dbReference type="PROSITE" id="PS00135">
    <property type="entry name" value="TRYPSIN_SER"/>
    <property type="match status" value="1"/>
</dbReference>
<proteinExistence type="evidence at protein level"/>
<organism>
    <name type="scientific">Protobothrops mucrosquamatus</name>
    <name type="common">Taiwan habu</name>
    <name type="synonym">Trimeresurus mucrosquamatus</name>
    <dbReference type="NCBI Taxonomy" id="103944"/>
    <lineage>
        <taxon>Eukaryota</taxon>
        <taxon>Metazoa</taxon>
        <taxon>Chordata</taxon>
        <taxon>Craniata</taxon>
        <taxon>Vertebrata</taxon>
        <taxon>Euteleostomi</taxon>
        <taxon>Lepidosauria</taxon>
        <taxon>Squamata</taxon>
        <taxon>Bifurcata</taxon>
        <taxon>Unidentata</taxon>
        <taxon>Episquamata</taxon>
        <taxon>Toxicofera</taxon>
        <taxon>Serpentes</taxon>
        <taxon>Colubroidea</taxon>
        <taxon>Viperidae</taxon>
        <taxon>Crotalinae</taxon>
        <taxon>Protobothrops</taxon>
    </lineage>
</organism>
<sequence>MVLIRVLANLLILQLSYAQKSSELVIGGDECNINEHPFLVLVYYDDYQCGGTLLNEEWVLTAAHCNGKDMEIYLGVHSKKVPNKDVQRRVPKEKFFCDSSKTYTKWNKDIMLIRLDRPVRKSAHIAPLSLPSSPPSVGSVCRVMGWGTITSPQETYPDVPHCANINLLDYEVCRAAYAGLPATSRTLCAGILEGGKDSCVGDSGGPLICNGQFQGIVSWGGDPCAQPREPGVCTNVFDHLDWIKGIIAGNTDVTCPL</sequence>
<reference key="1">
    <citation type="journal article" date="1994" name="Biochem. Biophys. Res. Commun.">
        <title>Characterization of one novel venom protease with beta-fibrinogenase activity from the Taiwan habu (Trimeresurus mucrosquamatus): purification and cDNA sequence analysis.</title>
        <authorList>
            <person name="Hung C.-C."/>
            <person name="Huang K.F."/>
            <person name="Chiou S.-H."/>
        </authorList>
    </citation>
    <scope>NUCLEOTIDE SEQUENCE [MRNA]</scope>
    <scope>FUNCTION</scope>
    <scope>SUBUNIT</scope>
    <source>
        <tissue>Venom</tissue>
        <tissue>Venom gland</tissue>
    </source>
</reference>
<reference key="2">
    <citation type="journal article" date="2001" name="Biochem. Biophys. Res. Commun.">
        <title>Fibrinogenolytic proteases isolated from the snake venom of Taiwan habu: serine proteases with kallikrein-like and angiotensin-degrading activities.</title>
        <authorList>
            <person name="Hung C.C."/>
            <person name="Chiou S.H."/>
        </authorList>
    </citation>
    <scope>FUNCTION</scope>
    <scope>BIOPHYSICOCHEMICAL PROPERTIES</scope>
    <source>
        <tissue>Venom</tissue>
    </source>
</reference>
<feature type="signal peptide" evidence="1">
    <location>
        <begin position="1"/>
        <end position="18"/>
    </location>
</feature>
<feature type="propeptide" id="PRO_0000028407">
    <location>
        <begin position="19"/>
        <end position="24"/>
    </location>
</feature>
<feature type="chain" id="PRO_0000028408" description="Beta-fibrinogenase mucrofibrase-1">
    <location>
        <begin position="25"/>
        <end position="257"/>
    </location>
</feature>
<feature type="domain" description="Peptidase S1" evidence="2">
    <location>
        <begin position="25"/>
        <end position="248"/>
    </location>
</feature>
<feature type="active site" description="Charge relay system" evidence="1">
    <location>
        <position position="64"/>
    </location>
</feature>
<feature type="active site" description="Charge relay system" evidence="1">
    <location>
        <position position="109"/>
    </location>
</feature>
<feature type="active site" description="Charge relay system" evidence="1">
    <location>
        <position position="203"/>
    </location>
</feature>
<feature type="disulfide bond" evidence="2">
    <location>
        <begin position="31"/>
        <end position="162"/>
    </location>
</feature>
<feature type="disulfide bond" evidence="2">
    <location>
        <begin position="49"/>
        <end position="65"/>
    </location>
</feature>
<feature type="disulfide bond" evidence="2">
    <location>
        <begin position="97"/>
        <end position="255"/>
    </location>
</feature>
<feature type="disulfide bond" evidence="2">
    <location>
        <begin position="141"/>
        <end position="209"/>
    </location>
</feature>
<feature type="disulfide bond" evidence="2">
    <location>
        <begin position="173"/>
        <end position="188"/>
    </location>
</feature>
<feature type="disulfide bond" evidence="2">
    <location>
        <begin position="199"/>
        <end position="224"/>
    </location>
</feature>
<accession>Q91507</accession>
<name>VSP1_PROMU</name>